<feature type="chain" id="PRO_1000091006" description="Aspartate--tRNA ligase">
    <location>
        <begin position="1"/>
        <end position="600"/>
    </location>
</feature>
<feature type="region of interest" description="Aspartate" evidence="1">
    <location>
        <begin position="199"/>
        <end position="202"/>
    </location>
</feature>
<feature type="binding site" evidence="1">
    <location>
        <position position="175"/>
    </location>
    <ligand>
        <name>L-aspartate</name>
        <dbReference type="ChEBI" id="CHEBI:29991"/>
    </ligand>
</feature>
<feature type="binding site" evidence="1">
    <location>
        <begin position="221"/>
        <end position="223"/>
    </location>
    <ligand>
        <name>ATP</name>
        <dbReference type="ChEBI" id="CHEBI:30616"/>
    </ligand>
</feature>
<feature type="binding site" evidence="1">
    <location>
        <position position="221"/>
    </location>
    <ligand>
        <name>L-aspartate</name>
        <dbReference type="ChEBI" id="CHEBI:29991"/>
    </ligand>
</feature>
<feature type="binding site" evidence="1">
    <location>
        <position position="230"/>
    </location>
    <ligand>
        <name>ATP</name>
        <dbReference type="ChEBI" id="CHEBI:30616"/>
    </ligand>
</feature>
<feature type="binding site" evidence="1">
    <location>
        <position position="448"/>
    </location>
    <ligand>
        <name>L-aspartate</name>
        <dbReference type="ChEBI" id="CHEBI:29991"/>
    </ligand>
</feature>
<feature type="binding site" evidence="1">
    <location>
        <position position="484"/>
    </location>
    <ligand>
        <name>ATP</name>
        <dbReference type="ChEBI" id="CHEBI:30616"/>
    </ligand>
</feature>
<feature type="binding site" evidence="1">
    <location>
        <position position="491"/>
    </location>
    <ligand>
        <name>L-aspartate</name>
        <dbReference type="ChEBI" id="CHEBI:29991"/>
    </ligand>
</feature>
<feature type="binding site" evidence="1">
    <location>
        <begin position="536"/>
        <end position="539"/>
    </location>
    <ligand>
        <name>ATP</name>
        <dbReference type="ChEBI" id="CHEBI:30616"/>
    </ligand>
</feature>
<reference key="1">
    <citation type="journal article" date="2008" name="DNA Res.">
        <title>Comparative genome analysis of Lactobacillus reuteri and Lactobacillus fermentum reveal a genomic island for reuterin and cobalamin production.</title>
        <authorList>
            <person name="Morita H."/>
            <person name="Toh H."/>
            <person name="Fukuda S."/>
            <person name="Horikawa H."/>
            <person name="Oshima K."/>
            <person name="Suzuki T."/>
            <person name="Murakami M."/>
            <person name="Hisamatsu S."/>
            <person name="Kato Y."/>
            <person name="Takizawa T."/>
            <person name="Fukuoka H."/>
            <person name="Yoshimura T."/>
            <person name="Itoh K."/>
            <person name="O'Sullivan D.J."/>
            <person name="McKay L.L."/>
            <person name="Ohno H."/>
            <person name="Kikuchi J."/>
            <person name="Masaoka T."/>
            <person name="Hattori M."/>
        </authorList>
    </citation>
    <scope>NUCLEOTIDE SEQUENCE [LARGE SCALE GENOMIC DNA]</scope>
    <source>
        <strain>JCM 1112</strain>
    </source>
</reference>
<sequence length="600" mass="68431">MKRTNYAGDTNEQQVGQEVVLKGWVAKRRNLGGLIFIDLWDREGIVQLVFNEKENPEAFEIANAVRNQYVLEVQGKVQLRAEKEINPDMKTGKVEVAVDEVKVLAKSETTPFDITDGVDASEDLRMKYRYLDLRRPEMMRNLKLRSKVASIVHNYYDNEGFMDVETPDLTRSTPEGARDYIVPSRVYPGHFYALPQSPQLFKQLLMAAGVDKYYQLARCFRDEDLRGDRQPEFTQIDTEMSFATPEDIQTVTEGLIKRVMKEIVGVDVKTPFPRMEWQEAMDKYGSDKPDTRFGMLIHDLSDIVKDSSFKVFANTVADGNYVRAIRVPGGADKYSRKDISKYEEYIKRFGAKGLAWVKVTADGYNGPVAKFLNDQVAQINEEMDAKEGDLILFVAGSFHVVSDSLGYLRRAIAEELDMIKPDQWNYLWVVNWPMFEYDEGFGKWIAAHHPFTMLNEEDLHYLEDGEDPHKAHAQSYDIILNGNEIGGGSIRIHDPKIQEKVLKALGYTKERAEARFGFLLKALTMGMPPEGGLAFGLDRWVMLLAQADSIRDVIPFPKNSKAVEPLTAAPGKVSEQQLDDLKIEFDEKIDYKLDQDPDEQ</sequence>
<gene>
    <name evidence="1" type="primary">aspS</name>
    <name type="ordered locus">LAR_0695</name>
</gene>
<protein>
    <recommendedName>
        <fullName evidence="1">Aspartate--tRNA ligase</fullName>
        <ecNumber evidence="1">6.1.1.12</ecNumber>
    </recommendedName>
    <alternativeName>
        <fullName evidence="1">Aspartyl-tRNA synthetase</fullName>
        <shortName evidence="1">AspRS</shortName>
    </alternativeName>
</protein>
<dbReference type="EC" id="6.1.1.12" evidence="1"/>
<dbReference type="EMBL" id="AP007281">
    <property type="protein sequence ID" value="BAG25211.1"/>
    <property type="molecule type" value="Genomic_DNA"/>
</dbReference>
<dbReference type="RefSeq" id="WP_003668146.1">
    <property type="nucleotide sequence ID" value="NC_010609.1"/>
</dbReference>
<dbReference type="SMR" id="B2G6X9"/>
<dbReference type="KEGG" id="lrf:LAR_0695"/>
<dbReference type="HOGENOM" id="CLU_014330_3_2_9"/>
<dbReference type="GO" id="GO:0005737">
    <property type="term" value="C:cytoplasm"/>
    <property type="evidence" value="ECO:0007669"/>
    <property type="project" value="UniProtKB-SubCell"/>
</dbReference>
<dbReference type="GO" id="GO:0004815">
    <property type="term" value="F:aspartate-tRNA ligase activity"/>
    <property type="evidence" value="ECO:0007669"/>
    <property type="project" value="UniProtKB-UniRule"/>
</dbReference>
<dbReference type="GO" id="GO:0005524">
    <property type="term" value="F:ATP binding"/>
    <property type="evidence" value="ECO:0007669"/>
    <property type="project" value="UniProtKB-UniRule"/>
</dbReference>
<dbReference type="GO" id="GO:0140096">
    <property type="term" value="F:catalytic activity, acting on a protein"/>
    <property type="evidence" value="ECO:0007669"/>
    <property type="project" value="UniProtKB-ARBA"/>
</dbReference>
<dbReference type="GO" id="GO:0003676">
    <property type="term" value="F:nucleic acid binding"/>
    <property type="evidence" value="ECO:0007669"/>
    <property type="project" value="InterPro"/>
</dbReference>
<dbReference type="GO" id="GO:0016740">
    <property type="term" value="F:transferase activity"/>
    <property type="evidence" value="ECO:0007669"/>
    <property type="project" value="UniProtKB-ARBA"/>
</dbReference>
<dbReference type="GO" id="GO:0006422">
    <property type="term" value="P:aspartyl-tRNA aminoacylation"/>
    <property type="evidence" value="ECO:0007669"/>
    <property type="project" value="UniProtKB-UniRule"/>
</dbReference>
<dbReference type="CDD" id="cd00777">
    <property type="entry name" value="AspRS_core"/>
    <property type="match status" value="1"/>
</dbReference>
<dbReference type="CDD" id="cd04317">
    <property type="entry name" value="EcAspRS_like_N"/>
    <property type="match status" value="1"/>
</dbReference>
<dbReference type="Gene3D" id="3.30.930.10">
    <property type="entry name" value="Bira Bifunctional Protein, Domain 2"/>
    <property type="match status" value="1"/>
</dbReference>
<dbReference type="Gene3D" id="3.30.1360.30">
    <property type="entry name" value="GAD-like domain"/>
    <property type="match status" value="1"/>
</dbReference>
<dbReference type="Gene3D" id="2.40.50.140">
    <property type="entry name" value="Nucleic acid-binding proteins"/>
    <property type="match status" value="1"/>
</dbReference>
<dbReference type="HAMAP" id="MF_00044">
    <property type="entry name" value="Asp_tRNA_synth_type1"/>
    <property type="match status" value="1"/>
</dbReference>
<dbReference type="InterPro" id="IPR004364">
    <property type="entry name" value="Aa-tRNA-synt_II"/>
</dbReference>
<dbReference type="InterPro" id="IPR006195">
    <property type="entry name" value="aa-tRNA-synth_II"/>
</dbReference>
<dbReference type="InterPro" id="IPR045864">
    <property type="entry name" value="aa-tRNA-synth_II/BPL/LPL"/>
</dbReference>
<dbReference type="InterPro" id="IPR004524">
    <property type="entry name" value="Asp-tRNA-ligase_1"/>
</dbReference>
<dbReference type="InterPro" id="IPR047089">
    <property type="entry name" value="Asp-tRNA-ligase_1_N"/>
</dbReference>
<dbReference type="InterPro" id="IPR002312">
    <property type="entry name" value="Asp/Asn-tRNA-synth_IIb"/>
</dbReference>
<dbReference type="InterPro" id="IPR047090">
    <property type="entry name" value="AspRS_core"/>
</dbReference>
<dbReference type="InterPro" id="IPR004115">
    <property type="entry name" value="GAD-like_sf"/>
</dbReference>
<dbReference type="InterPro" id="IPR029351">
    <property type="entry name" value="GAD_dom"/>
</dbReference>
<dbReference type="InterPro" id="IPR012340">
    <property type="entry name" value="NA-bd_OB-fold"/>
</dbReference>
<dbReference type="InterPro" id="IPR004365">
    <property type="entry name" value="NA-bd_OB_tRNA"/>
</dbReference>
<dbReference type="NCBIfam" id="TIGR00459">
    <property type="entry name" value="aspS_bact"/>
    <property type="match status" value="1"/>
</dbReference>
<dbReference type="NCBIfam" id="NF001750">
    <property type="entry name" value="PRK00476.1"/>
    <property type="match status" value="1"/>
</dbReference>
<dbReference type="PANTHER" id="PTHR22594:SF5">
    <property type="entry name" value="ASPARTATE--TRNA LIGASE, MITOCHONDRIAL"/>
    <property type="match status" value="1"/>
</dbReference>
<dbReference type="PANTHER" id="PTHR22594">
    <property type="entry name" value="ASPARTYL/LYSYL-TRNA SYNTHETASE"/>
    <property type="match status" value="1"/>
</dbReference>
<dbReference type="Pfam" id="PF02938">
    <property type="entry name" value="GAD"/>
    <property type="match status" value="1"/>
</dbReference>
<dbReference type="Pfam" id="PF00152">
    <property type="entry name" value="tRNA-synt_2"/>
    <property type="match status" value="1"/>
</dbReference>
<dbReference type="Pfam" id="PF01336">
    <property type="entry name" value="tRNA_anti-codon"/>
    <property type="match status" value="1"/>
</dbReference>
<dbReference type="PRINTS" id="PR01042">
    <property type="entry name" value="TRNASYNTHASP"/>
</dbReference>
<dbReference type="SUPFAM" id="SSF55681">
    <property type="entry name" value="Class II aaRS and biotin synthetases"/>
    <property type="match status" value="1"/>
</dbReference>
<dbReference type="SUPFAM" id="SSF55261">
    <property type="entry name" value="GAD domain-like"/>
    <property type="match status" value="1"/>
</dbReference>
<dbReference type="SUPFAM" id="SSF50249">
    <property type="entry name" value="Nucleic acid-binding proteins"/>
    <property type="match status" value="1"/>
</dbReference>
<dbReference type="PROSITE" id="PS50862">
    <property type="entry name" value="AA_TRNA_LIGASE_II"/>
    <property type="match status" value="1"/>
</dbReference>
<evidence type="ECO:0000255" key="1">
    <source>
        <dbReference type="HAMAP-Rule" id="MF_00044"/>
    </source>
</evidence>
<keyword id="KW-0030">Aminoacyl-tRNA synthetase</keyword>
<keyword id="KW-0067">ATP-binding</keyword>
<keyword id="KW-0963">Cytoplasm</keyword>
<keyword id="KW-0436">Ligase</keyword>
<keyword id="KW-0547">Nucleotide-binding</keyword>
<keyword id="KW-0648">Protein biosynthesis</keyword>
<name>SYD_LIMRJ</name>
<organism>
    <name type="scientific">Limosilactobacillus reuteri subsp. reuteri (strain JCM 1112)</name>
    <name type="common">Lactobacillus reuteri</name>
    <dbReference type="NCBI Taxonomy" id="557433"/>
    <lineage>
        <taxon>Bacteria</taxon>
        <taxon>Bacillati</taxon>
        <taxon>Bacillota</taxon>
        <taxon>Bacilli</taxon>
        <taxon>Lactobacillales</taxon>
        <taxon>Lactobacillaceae</taxon>
        <taxon>Limosilactobacillus</taxon>
    </lineage>
</organism>
<comment type="function">
    <text evidence="1">Catalyzes the attachment of L-aspartate to tRNA(Asp) in a two-step reaction: L-aspartate is first activated by ATP to form Asp-AMP and then transferred to the acceptor end of tRNA(Asp).</text>
</comment>
<comment type="catalytic activity">
    <reaction evidence="1">
        <text>tRNA(Asp) + L-aspartate + ATP = L-aspartyl-tRNA(Asp) + AMP + diphosphate</text>
        <dbReference type="Rhea" id="RHEA:19649"/>
        <dbReference type="Rhea" id="RHEA-COMP:9660"/>
        <dbReference type="Rhea" id="RHEA-COMP:9678"/>
        <dbReference type="ChEBI" id="CHEBI:29991"/>
        <dbReference type="ChEBI" id="CHEBI:30616"/>
        <dbReference type="ChEBI" id="CHEBI:33019"/>
        <dbReference type="ChEBI" id="CHEBI:78442"/>
        <dbReference type="ChEBI" id="CHEBI:78516"/>
        <dbReference type="ChEBI" id="CHEBI:456215"/>
        <dbReference type="EC" id="6.1.1.12"/>
    </reaction>
</comment>
<comment type="subunit">
    <text evidence="1">Homodimer.</text>
</comment>
<comment type="subcellular location">
    <subcellularLocation>
        <location evidence="1">Cytoplasm</location>
    </subcellularLocation>
</comment>
<comment type="similarity">
    <text evidence="1">Belongs to the class-II aminoacyl-tRNA synthetase family. Type 1 subfamily.</text>
</comment>
<proteinExistence type="inferred from homology"/>
<accession>B2G6X9</accession>